<sequence length="520" mass="57141">MSTTAYPDTILIIDFGSQVTQLIARRVREANVYCEIVPFQSADEAFKRLQPKGVILSGSPHSTTDIGSPRAPQAIFDAGIPVLGICYGEQTMCAQLGGNVESGHDREFGRAFLDVQEDSPLFAGIWAKGTRHQVWMSHGDRVTSLPDGFTIIGTSPNAPYAVIADEKRKYYGVQFHPEVVHTPDGAKLLQNFVHRIVGVKPGWTMGAYREQAVEAIRKQVGSGKVICALSGGVDSSVAALLAHEAVGDQLTCILVDHGLMRKDEAQQVVEMFREHYNLPLILVDASDRFIGALEGESDPEKKRKTIGRLFIEVFEEEARKLGGADFLVQGTLYPDVIESVSFTGGPSVTIKSHHNVGGLPERMKMQLVEPLRELFKDEVRLLGKELGLPDSFIGRHPFPGPGLAIRCPGGVTREKLEILREADAIYLDEIRKAGLYDAIWQAFAVLLPVQTVGVMGDGRTYEFVCALRAVTSVDGMTADFYHYDMNFLGNAATRIINEVRGINRVVYDVTSKPPGTIEWE</sequence>
<comment type="function">
    <text evidence="1">Catalyzes the synthesis of GMP from XMP.</text>
</comment>
<comment type="catalytic activity">
    <reaction evidence="1">
        <text>XMP + L-glutamine + ATP + H2O = GMP + L-glutamate + AMP + diphosphate + 2 H(+)</text>
        <dbReference type="Rhea" id="RHEA:11680"/>
        <dbReference type="ChEBI" id="CHEBI:15377"/>
        <dbReference type="ChEBI" id="CHEBI:15378"/>
        <dbReference type="ChEBI" id="CHEBI:29985"/>
        <dbReference type="ChEBI" id="CHEBI:30616"/>
        <dbReference type="ChEBI" id="CHEBI:33019"/>
        <dbReference type="ChEBI" id="CHEBI:57464"/>
        <dbReference type="ChEBI" id="CHEBI:58115"/>
        <dbReference type="ChEBI" id="CHEBI:58359"/>
        <dbReference type="ChEBI" id="CHEBI:456215"/>
        <dbReference type="EC" id="6.3.5.2"/>
    </reaction>
</comment>
<comment type="pathway">
    <text evidence="1">Purine metabolism; GMP biosynthesis; GMP from XMP (L-Gln route): step 1/1.</text>
</comment>
<comment type="subunit">
    <text evidence="1">Homodimer.</text>
</comment>
<keyword id="KW-0067">ATP-binding</keyword>
<keyword id="KW-0315">Glutamine amidotransferase</keyword>
<keyword id="KW-0332">GMP biosynthesis</keyword>
<keyword id="KW-0436">Ligase</keyword>
<keyword id="KW-0547">Nucleotide-binding</keyword>
<keyword id="KW-0658">Purine biosynthesis</keyword>
<protein>
    <recommendedName>
        <fullName evidence="1">GMP synthase [glutamine-hydrolyzing]</fullName>
        <ecNumber evidence="1">6.3.5.2</ecNumber>
    </recommendedName>
    <alternativeName>
        <fullName evidence="1">GMP synthetase</fullName>
    </alternativeName>
    <alternativeName>
        <fullName evidence="1">Glutamine amidotransferase</fullName>
    </alternativeName>
</protein>
<accession>B2SBN5</accession>
<evidence type="ECO:0000255" key="1">
    <source>
        <dbReference type="HAMAP-Rule" id="MF_00344"/>
    </source>
</evidence>
<dbReference type="EC" id="6.3.5.2" evidence="1"/>
<dbReference type="EMBL" id="CP000888">
    <property type="protein sequence ID" value="ACD74272.1"/>
    <property type="molecule type" value="Genomic_DNA"/>
</dbReference>
<dbReference type="RefSeq" id="WP_002966228.1">
    <property type="nucleotide sequence ID" value="NC_010740.1"/>
</dbReference>
<dbReference type="SMR" id="B2SBN5"/>
<dbReference type="MEROPS" id="C26.957"/>
<dbReference type="GeneID" id="97535486"/>
<dbReference type="KEGG" id="bmc:BAbS19_II07790"/>
<dbReference type="HOGENOM" id="CLU_014340_0_5_5"/>
<dbReference type="UniPathway" id="UPA00189">
    <property type="reaction ID" value="UER00296"/>
</dbReference>
<dbReference type="Proteomes" id="UP000002565">
    <property type="component" value="Chromosome 2"/>
</dbReference>
<dbReference type="GO" id="GO:0005829">
    <property type="term" value="C:cytosol"/>
    <property type="evidence" value="ECO:0007669"/>
    <property type="project" value="TreeGrafter"/>
</dbReference>
<dbReference type="GO" id="GO:0005524">
    <property type="term" value="F:ATP binding"/>
    <property type="evidence" value="ECO:0007669"/>
    <property type="project" value="UniProtKB-UniRule"/>
</dbReference>
<dbReference type="GO" id="GO:0003921">
    <property type="term" value="F:GMP synthase activity"/>
    <property type="evidence" value="ECO:0007669"/>
    <property type="project" value="InterPro"/>
</dbReference>
<dbReference type="CDD" id="cd01742">
    <property type="entry name" value="GATase1_GMP_Synthase"/>
    <property type="match status" value="1"/>
</dbReference>
<dbReference type="CDD" id="cd01997">
    <property type="entry name" value="GMP_synthase_C"/>
    <property type="match status" value="1"/>
</dbReference>
<dbReference type="FunFam" id="3.30.300.10:FF:000002">
    <property type="entry name" value="GMP synthase [glutamine-hydrolyzing]"/>
    <property type="match status" value="1"/>
</dbReference>
<dbReference type="FunFam" id="3.40.50.620:FF:000001">
    <property type="entry name" value="GMP synthase [glutamine-hydrolyzing]"/>
    <property type="match status" value="1"/>
</dbReference>
<dbReference type="FunFam" id="3.40.50.880:FF:000001">
    <property type="entry name" value="GMP synthase [glutamine-hydrolyzing]"/>
    <property type="match status" value="1"/>
</dbReference>
<dbReference type="Gene3D" id="3.30.300.10">
    <property type="match status" value="1"/>
</dbReference>
<dbReference type="Gene3D" id="3.40.50.880">
    <property type="match status" value="1"/>
</dbReference>
<dbReference type="Gene3D" id="3.40.50.620">
    <property type="entry name" value="HUPs"/>
    <property type="match status" value="1"/>
</dbReference>
<dbReference type="HAMAP" id="MF_00344">
    <property type="entry name" value="GMP_synthase"/>
    <property type="match status" value="1"/>
</dbReference>
<dbReference type="InterPro" id="IPR029062">
    <property type="entry name" value="Class_I_gatase-like"/>
</dbReference>
<dbReference type="InterPro" id="IPR017926">
    <property type="entry name" value="GATASE"/>
</dbReference>
<dbReference type="InterPro" id="IPR001674">
    <property type="entry name" value="GMP_synth_C"/>
</dbReference>
<dbReference type="InterPro" id="IPR004739">
    <property type="entry name" value="GMP_synth_GATase"/>
</dbReference>
<dbReference type="InterPro" id="IPR022955">
    <property type="entry name" value="GMP_synthase"/>
</dbReference>
<dbReference type="InterPro" id="IPR025777">
    <property type="entry name" value="GMPS_ATP_PPase_dom"/>
</dbReference>
<dbReference type="InterPro" id="IPR022310">
    <property type="entry name" value="NAD/GMP_synthase"/>
</dbReference>
<dbReference type="InterPro" id="IPR014729">
    <property type="entry name" value="Rossmann-like_a/b/a_fold"/>
</dbReference>
<dbReference type="NCBIfam" id="TIGR00884">
    <property type="entry name" value="guaA_Cterm"/>
    <property type="match status" value="1"/>
</dbReference>
<dbReference type="NCBIfam" id="TIGR00888">
    <property type="entry name" value="guaA_Nterm"/>
    <property type="match status" value="1"/>
</dbReference>
<dbReference type="NCBIfam" id="NF000848">
    <property type="entry name" value="PRK00074.1"/>
    <property type="match status" value="1"/>
</dbReference>
<dbReference type="PANTHER" id="PTHR11922:SF2">
    <property type="entry name" value="GMP SYNTHASE [GLUTAMINE-HYDROLYZING]"/>
    <property type="match status" value="1"/>
</dbReference>
<dbReference type="PANTHER" id="PTHR11922">
    <property type="entry name" value="GMP SYNTHASE-RELATED"/>
    <property type="match status" value="1"/>
</dbReference>
<dbReference type="Pfam" id="PF00117">
    <property type="entry name" value="GATase"/>
    <property type="match status" value="1"/>
</dbReference>
<dbReference type="Pfam" id="PF00958">
    <property type="entry name" value="GMP_synt_C"/>
    <property type="match status" value="1"/>
</dbReference>
<dbReference type="Pfam" id="PF02540">
    <property type="entry name" value="NAD_synthase"/>
    <property type="match status" value="1"/>
</dbReference>
<dbReference type="PRINTS" id="PR00097">
    <property type="entry name" value="ANTSNTHASEII"/>
</dbReference>
<dbReference type="PRINTS" id="PR00096">
    <property type="entry name" value="GATASE"/>
</dbReference>
<dbReference type="SUPFAM" id="SSF52402">
    <property type="entry name" value="Adenine nucleotide alpha hydrolases-like"/>
    <property type="match status" value="1"/>
</dbReference>
<dbReference type="SUPFAM" id="SSF52317">
    <property type="entry name" value="Class I glutamine amidotransferase-like"/>
    <property type="match status" value="1"/>
</dbReference>
<dbReference type="SUPFAM" id="SSF54810">
    <property type="entry name" value="GMP synthetase C-terminal dimerisation domain"/>
    <property type="match status" value="1"/>
</dbReference>
<dbReference type="PROSITE" id="PS51273">
    <property type="entry name" value="GATASE_TYPE_1"/>
    <property type="match status" value="1"/>
</dbReference>
<dbReference type="PROSITE" id="PS51553">
    <property type="entry name" value="GMPS_ATP_PPASE"/>
    <property type="match status" value="1"/>
</dbReference>
<reference key="1">
    <citation type="journal article" date="2008" name="PLoS ONE">
        <title>Genome sequence of Brucella abortus vaccine strain S19 compared to virulent strains yields candidate virulence genes.</title>
        <authorList>
            <person name="Crasta O.R."/>
            <person name="Folkerts O."/>
            <person name="Fei Z."/>
            <person name="Mane S.P."/>
            <person name="Evans C."/>
            <person name="Martino-Catt S."/>
            <person name="Bricker B."/>
            <person name="Yu G."/>
            <person name="Du L."/>
            <person name="Sobral B.W."/>
        </authorList>
    </citation>
    <scope>NUCLEOTIDE SEQUENCE [LARGE SCALE GENOMIC DNA]</scope>
    <source>
        <strain>S19</strain>
    </source>
</reference>
<proteinExistence type="inferred from homology"/>
<organism>
    <name type="scientific">Brucella abortus (strain S19)</name>
    <dbReference type="NCBI Taxonomy" id="430066"/>
    <lineage>
        <taxon>Bacteria</taxon>
        <taxon>Pseudomonadati</taxon>
        <taxon>Pseudomonadota</taxon>
        <taxon>Alphaproteobacteria</taxon>
        <taxon>Hyphomicrobiales</taxon>
        <taxon>Brucellaceae</taxon>
        <taxon>Brucella/Ochrobactrum group</taxon>
        <taxon>Brucella</taxon>
    </lineage>
</organism>
<feature type="chain" id="PRO_1000120225" description="GMP synthase [glutamine-hydrolyzing]">
    <location>
        <begin position="1"/>
        <end position="520"/>
    </location>
</feature>
<feature type="domain" description="Glutamine amidotransferase type-1" evidence="1">
    <location>
        <begin position="9"/>
        <end position="202"/>
    </location>
</feature>
<feature type="domain" description="GMPS ATP-PPase" evidence="1">
    <location>
        <begin position="203"/>
        <end position="395"/>
    </location>
</feature>
<feature type="active site" description="Nucleophile" evidence="1">
    <location>
        <position position="86"/>
    </location>
</feature>
<feature type="active site" evidence="1">
    <location>
        <position position="176"/>
    </location>
</feature>
<feature type="active site" evidence="1">
    <location>
        <position position="178"/>
    </location>
</feature>
<feature type="binding site" evidence="1">
    <location>
        <begin position="230"/>
        <end position="236"/>
    </location>
    <ligand>
        <name>ATP</name>
        <dbReference type="ChEBI" id="CHEBI:30616"/>
    </ligand>
</feature>
<name>GUAA_BRUA1</name>
<gene>
    <name evidence="1" type="primary">guaA</name>
    <name type="ordered locus">BAbS19_II07790</name>
</gene>